<evidence type="ECO:0000255" key="1">
    <source>
        <dbReference type="HAMAP-Rule" id="MF_00693"/>
    </source>
</evidence>
<keyword id="KW-0963">Cytoplasm</keyword>
<keyword id="KW-0238">DNA-binding</keyword>
<keyword id="KW-1185">Reference proteome</keyword>
<keyword id="KW-0804">Transcription</keyword>
<keyword id="KW-0805">Transcription regulation</keyword>
<feature type="chain" id="PRO_1000212600" description="Probable transcriptional regulatory protein Bcav_1989">
    <location>
        <begin position="1"/>
        <end position="252"/>
    </location>
</feature>
<dbReference type="EMBL" id="CP001618">
    <property type="protein sequence ID" value="ACQ80244.1"/>
    <property type="molecule type" value="Genomic_DNA"/>
</dbReference>
<dbReference type="RefSeq" id="WP_015882484.1">
    <property type="nucleotide sequence ID" value="NC_012669.1"/>
</dbReference>
<dbReference type="SMR" id="C5C5Q3"/>
<dbReference type="STRING" id="471853.Bcav_1989"/>
<dbReference type="KEGG" id="bcv:Bcav_1989"/>
<dbReference type="eggNOG" id="COG0217">
    <property type="taxonomic scope" value="Bacteria"/>
</dbReference>
<dbReference type="HOGENOM" id="CLU_062974_2_2_11"/>
<dbReference type="OrthoDB" id="9781053at2"/>
<dbReference type="Proteomes" id="UP000007962">
    <property type="component" value="Chromosome"/>
</dbReference>
<dbReference type="GO" id="GO:0005829">
    <property type="term" value="C:cytosol"/>
    <property type="evidence" value="ECO:0007669"/>
    <property type="project" value="TreeGrafter"/>
</dbReference>
<dbReference type="GO" id="GO:0003677">
    <property type="term" value="F:DNA binding"/>
    <property type="evidence" value="ECO:0007669"/>
    <property type="project" value="UniProtKB-UniRule"/>
</dbReference>
<dbReference type="GO" id="GO:0006355">
    <property type="term" value="P:regulation of DNA-templated transcription"/>
    <property type="evidence" value="ECO:0007669"/>
    <property type="project" value="UniProtKB-UniRule"/>
</dbReference>
<dbReference type="FunFam" id="1.10.10.200:FF:000002">
    <property type="entry name" value="Probable transcriptional regulatory protein CLM62_37755"/>
    <property type="match status" value="1"/>
</dbReference>
<dbReference type="FunFam" id="3.30.70.980:FF:000006">
    <property type="entry name" value="Probable transcriptional regulatory protein J113_18170"/>
    <property type="match status" value="1"/>
</dbReference>
<dbReference type="Gene3D" id="1.10.10.200">
    <property type="match status" value="1"/>
</dbReference>
<dbReference type="Gene3D" id="3.30.70.980">
    <property type="match status" value="2"/>
</dbReference>
<dbReference type="HAMAP" id="MF_00693">
    <property type="entry name" value="Transcrip_reg_TACO1"/>
    <property type="match status" value="1"/>
</dbReference>
<dbReference type="InterPro" id="IPR017856">
    <property type="entry name" value="Integrase-like_N"/>
</dbReference>
<dbReference type="InterPro" id="IPR048300">
    <property type="entry name" value="TACO1_YebC-like_2nd/3rd_dom"/>
</dbReference>
<dbReference type="InterPro" id="IPR049083">
    <property type="entry name" value="TACO1_YebC_N"/>
</dbReference>
<dbReference type="InterPro" id="IPR002876">
    <property type="entry name" value="Transcrip_reg_TACO1-like"/>
</dbReference>
<dbReference type="InterPro" id="IPR026564">
    <property type="entry name" value="Transcrip_reg_TACO1-like_dom3"/>
</dbReference>
<dbReference type="InterPro" id="IPR029072">
    <property type="entry name" value="YebC-like"/>
</dbReference>
<dbReference type="NCBIfam" id="NF001030">
    <property type="entry name" value="PRK00110.1"/>
    <property type="match status" value="1"/>
</dbReference>
<dbReference type="NCBIfam" id="NF009044">
    <property type="entry name" value="PRK12378.1"/>
    <property type="match status" value="1"/>
</dbReference>
<dbReference type="NCBIfam" id="TIGR01033">
    <property type="entry name" value="YebC/PmpR family DNA-binding transcriptional regulator"/>
    <property type="match status" value="1"/>
</dbReference>
<dbReference type="PANTHER" id="PTHR12532:SF6">
    <property type="entry name" value="TRANSCRIPTIONAL REGULATORY PROTEIN YEBC-RELATED"/>
    <property type="match status" value="1"/>
</dbReference>
<dbReference type="PANTHER" id="PTHR12532">
    <property type="entry name" value="TRANSLATIONAL ACTIVATOR OF CYTOCHROME C OXIDASE 1"/>
    <property type="match status" value="1"/>
</dbReference>
<dbReference type="Pfam" id="PF20772">
    <property type="entry name" value="TACO1_YebC_N"/>
    <property type="match status" value="1"/>
</dbReference>
<dbReference type="Pfam" id="PF01709">
    <property type="entry name" value="Transcrip_reg"/>
    <property type="match status" value="1"/>
</dbReference>
<dbReference type="SUPFAM" id="SSF75625">
    <property type="entry name" value="YebC-like"/>
    <property type="match status" value="1"/>
</dbReference>
<sequence length="252" mass="26729">MSGHSKWATTKHKKAVIDARRGKLFAKLIKNIEVAARTGGGDPAGNPTLYDAIQKAKKTSVPNDNIDRAVKRGAGLEAGGADYQTIMYEGYAPGGVAVLVECLTDNRNRAASDVRVAFTRNGGSLADPGSVSYLFSRRGVVVVPKTDGLDEDDVLGAVLDAGAEEVNDLGEAFEVLSEATDLVAVRTALQDAGLDYDSAEAQFVPATQIEVDVDGARKVLRLIDALEDSDDVQNVFANFDATDEVLAQLDED</sequence>
<name>Y1989_BEUC1</name>
<comment type="subcellular location">
    <subcellularLocation>
        <location evidence="1">Cytoplasm</location>
    </subcellularLocation>
</comment>
<comment type="similarity">
    <text evidence="1">Belongs to the TACO1 family.</text>
</comment>
<gene>
    <name type="ordered locus">Bcav_1989</name>
</gene>
<reference key="1">
    <citation type="journal article" date="2009" name="Stand. Genomic Sci.">
        <title>Complete genome sequence of Beutenbergia cavernae type strain (HKI 0122).</title>
        <authorList>
            <person name="Land M."/>
            <person name="Pukall R."/>
            <person name="Abt B."/>
            <person name="Goker M."/>
            <person name="Rohde M."/>
            <person name="Glavina Del Rio T."/>
            <person name="Tice H."/>
            <person name="Copeland A."/>
            <person name="Cheng J.F."/>
            <person name="Lucas S."/>
            <person name="Chen F."/>
            <person name="Nolan M."/>
            <person name="Bruce D."/>
            <person name="Goodwin L."/>
            <person name="Pitluck S."/>
            <person name="Ivanova N."/>
            <person name="Mavromatis K."/>
            <person name="Ovchinnikova G."/>
            <person name="Pati A."/>
            <person name="Chen A."/>
            <person name="Palaniappan K."/>
            <person name="Hauser L."/>
            <person name="Chang Y.J."/>
            <person name="Jefferies C.C."/>
            <person name="Saunders E."/>
            <person name="Brettin T."/>
            <person name="Detter J.C."/>
            <person name="Han C."/>
            <person name="Chain P."/>
            <person name="Bristow J."/>
            <person name="Eisen J.A."/>
            <person name="Markowitz V."/>
            <person name="Hugenholtz P."/>
            <person name="Kyrpides N.C."/>
            <person name="Klenk H.P."/>
            <person name="Lapidus A."/>
        </authorList>
    </citation>
    <scope>NUCLEOTIDE SEQUENCE [LARGE SCALE GENOMIC DNA]</scope>
    <source>
        <strain>ATCC BAA-8 / DSM 12333 / CCUG 43141 / JCM 11478 / NBRC 16432 / NCIMB 13614 / HKI 0122</strain>
    </source>
</reference>
<organism>
    <name type="scientific">Beutenbergia cavernae (strain ATCC BAA-8 / DSM 12333 / CCUG 43141 / JCM 11478 / NBRC 16432 / NCIMB 13614 / HKI 0122)</name>
    <dbReference type="NCBI Taxonomy" id="471853"/>
    <lineage>
        <taxon>Bacteria</taxon>
        <taxon>Bacillati</taxon>
        <taxon>Actinomycetota</taxon>
        <taxon>Actinomycetes</taxon>
        <taxon>Micrococcales</taxon>
        <taxon>Beutenbergiaceae</taxon>
        <taxon>Beutenbergia</taxon>
    </lineage>
</organism>
<proteinExistence type="inferred from homology"/>
<accession>C5C5Q3</accession>
<protein>
    <recommendedName>
        <fullName evidence="1">Probable transcriptional regulatory protein Bcav_1989</fullName>
    </recommendedName>
</protein>